<accession>Q1RJX3</accession>
<reference key="1">
    <citation type="journal article" date="2006" name="PLoS Genet.">
        <title>Genome sequence of Rickettsia bellii illuminates the role of amoebae in gene exchanges between intracellular pathogens.</title>
        <authorList>
            <person name="Ogata H."/>
            <person name="La Scola B."/>
            <person name="Audic S."/>
            <person name="Renesto P."/>
            <person name="Blanc G."/>
            <person name="Robert C."/>
            <person name="Fournier P.-E."/>
            <person name="Claverie J.-M."/>
            <person name="Raoult D."/>
        </authorList>
    </citation>
    <scope>NUCLEOTIDE SEQUENCE [LARGE SCALE GENOMIC DNA]</scope>
    <source>
        <strain>RML369-C</strain>
    </source>
</reference>
<sequence length="325" mass="35708">MQITVREALRDAMQEEMIRDDKVFVMGEEVAEYQGAYKVTQGLLEQFGPKRVIDTPITEYGFAGLAVGAAFAGLRPIVEFMTFNFAMQAMDHIVNSAAKTHYMSGGQVRCPIVFRGPNGAASRVAAQHSQNYAACYSYIPGLKVVAPYSAEDHKGLMITAIRDDNPVIFLENEILYGHSFDISENVEPIPFGKAKVLKEGDSVTIVTFSIQVKLALDAANILQSDNINCEVIDLRTIKPLDIDTIIESVKKTGRLVVIEEGWFFAGIGATIAAIVMKEAFDYLDAPVEIVSGKDVPLPYAVNLEKLALPSEYDVINAVKKVCYIK</sequence>
<organism>
    <name type="scientific">Rickettsia bellii (strain RML369-C)</name>
    <dbReference type="NCBI Taxonomy" id="336407"/>
    <lineage>
        <taxon>Bacteria</taxon>
        <taxon>Pseudomonadati</taxon>
        <taxon>Pseudomonadota</taxon>
        <taxon>Alphaproteobacteria</taxon>
        <taxon>Rickettsiales</taxon>
        <taxon>Rickettsiaceae</taxon>
        <taxon>Rickettsieae</taxon>
        <taxon>Rickettsia</taxon>
        <taxon>belli group</taxon>
    </lineage>
</organism>
<gene>
    <name type="primary">pdhB</name>
    <name type="ordered locus">RBE_0260</name>
</gene>
<proteinExistence type="inferred from homology"/>
<name>ODPB_RICBR</name>
<keyword id="KW-0560">Oxidoreductase</keyword>
<keyword id="KW-0670">Pyruvate</keyword>
<keyword id="KW-0786">Thiamine pyrophosphate</keyword>
<dbReference type="EC" id="1.2.4.1"/>
<dbReference type="EMBL" id="CP000087">
    <property type="protein sequence ID" value="ABE04341.1"/>
    <property type="molecule type" value="Genomic_DNA"/>
</dbReference>
<dbReference type="RefSeq" id="WP_011476953.1">
    <property type="nucleotide sequence ID" value="NC_007940.1"/>
</dbReference>
<dbReference type="SMR" id="Q1RJX3"/>
<dbReference type="KEGG" id="rbe:RBE_0260"/>
<dbReference type="eggNOG" id="COG0022">
    <property type="taxonomic scope" value="Bacteria"/>
</dbReference>
<dbReference type="HOGENOM" id="CLU_012907_1_1_5"/>
<dbReference type="OrthoDB" id="9780894at2"/>
<dbReference type="Proteomes" id="UP000001951">
    <property type="component" value="Chromosome"/>
</dbReference>
<dbReference type="GO" id="GO:0004739">
    <property type="term" value="F:pyruvate dehydrogenase (acetyl-transferring) activity"/>
    <property type="evidence" value="ECO:0007669"/>
    <property type="project" value="UniProtKB-EC"/>
</dbReference>
<dbReference type="GO" id="GO:0006086">
    <property type="term" value="P:pyruvate decarboxylation to acetyl-CoA"/>
    <property type="evidence" value="ECO:0007669"/>
    <property type="project" value="InterPro"/>
</dbReference>
<dbReference type="CDD" id="cd07036">
    <property type="entry name" value="TPP_PYR_E1-PDHc-beta_like"/>
    <property type="match status" value="1"/>
</dbReference>
<dbReference type="FunFam" id="3.40.50.920:FF:000001">
    <property type="entry name" value="Pyruvate dehydrogenase E1 beta subunit"/>
    <property type="match status" value="1"/>
</dbReference>
<dbReference type="FunFam" id="3.40.50.970:FF:000001">
    <property type="entry name" value="Pyruvate dehydrogenase E1 beta subunit"/>
    <property type="match status" value="1"/>
</dbReference>
<dbReference type="Gene3D" id="3.40.50.920">
    <property type="match status" value="1"/>
</dbReference>
<dbReference type="Gene3D" id="3.40.50.970">
    <property type="match status" value="1"/>
</dbReference>
<dbReference type="InterPro" id="IPR027110">
    <property type="entry name" value="PDHB_mito-type"/>
</dbReference>
<dbReference type="InterPro" id="IPR029061">
    <property type="entry name" value="THDP-binding"/>
</dbReference>
<dbReference type="InterPro" id="IPR009014">
    <property type="entry name" value="Transketo_C/PFOR_II"/>
</dbReference>
<dbReference type="InterPro" id="IPR005475">
    <property type="entry name" value="Transketolase-like_Pyr-bd"/>
</dbReference>
<dbReference type="InterPro" id="IPR033248">
    <property type="entry name" value="Transketolase_C"/>
</dbReference>
<dbReference type="NCBIfam" id="NF006667">
    <property type="entry name" value="PRK09212.1"/>
    <property type="match status" value="1"/>
</dbReference>
<dbReference type="NCBIfam" id="NF008854">
    <property type="entry name" value="PRK11892.1"/>
    <property type="match status" value="1"/>
</dbReference>
<dbReference type="PANTHER" id="PTHR11624">
    <property type="entry name" value="DEHYDROGENASE RELATED"/>
    <property type="match status" value="1"/>
</dbReference>
<dbReference type="PANTHER" id="PTHR11624:SF96">
    <property type="entry name" value="PYRUVATE DEHYDROGENASE E1 COMPONENT SUBUNIT BETA, MITOCHONDRIAL"/>
    <property type="match status" value="1"/>
</dbReference>
<dbReference type="Pfam" id="PF02779">
    <property type="entry name" value="Transket_pyr"/>
    <property type="match status" value="1"/>
</dbReference>
<dbReference type="Pfam" id="PF02780">
    <property type="entry name" value="Transketolase_C"/>
    <property type="match status" value="1"/>
</dbReference>
<dbReference type="SMART" id="SM00861">
    <property type="entry name" value="Transket_pyr"/>
    <property type="match status" value="1"/>
</dbReference>
<dbReference type="SUPFAM" id="SSF52518">
    <property type="entry name" value="Thiamin diphosphate-binding fold (THDP-binding)"/>
    <property type="match status" value="1"/>
</dbReference>
<dbReference type="SUPFAM" id="SSF52922">
    <property type="entry name" value="TK C-terminal domain-like"/>
    <property type="match status" value="1"/>
</dbReference>
<protein>
    <recommendedName>
        <fullName>Pyruvate dehydrogenase E1 component subunit beta</fullName>
        <ecNumber>1.2.4.1</ecNumber>
    </recommendedName>
</protein>
<comment type="function">
    <text evidence="1">The pyruvate dehydrogenase complex catalyzes the overall conversion of pyruvate to acetyl-CoA and CO(2). It contains multiple copies of three enzymatic components: pyruvate dehydrogenase (E1), dihydrolipoamide acetyltransferase (E2) and lipoamide dehydrogenase (E3) (By similarity).</text>
</comment>
<comment type="catalytic activity">
    <reaction>
        <text>N(6)-[(R)-lipoyl]-L-lysyl-[protein] + pyruvate + H(+) = N(6)-[(R)-S(8)-acetyldihydrolipoyl]-L-lysyl-[protein] + CO2</text>
        <dbReference type="Rhea" id="RHEA:19189"/>
        <dbReference type="Rhea" id="RHEA-COMP:10474"/>
        <dbReference type="Rhea" id="RHEA-COMP:10478"/>
        <dbReference type="ChEBI" id="CHEBI:15361"/>
        <dbReference type="ChEBI" id="CHEBI:15378"/>
        <dbReference type="ChEBI" id="CHEBI:16526"/>
        <dbReference type="ChEBI" id="CHEBI:83099"/>
        <dbReference type="ChEBI" id="CHEBI:83111"/>
        <dbReference type="EC" id="1.2.4.1"/>
    </reaction>
</comment>
<comment type="cofactor">
    <cofactor evidence="1">
        <name>thiamine diphosphate</name>
        <dbReference type="ChEBI" id="CHEBI:58937"/>
    </cofactor>
</comment>
<comment type="subunit">
    <text>Heterodimer of an alpha and a beta chain.</text>
</comment>
<evidence type="ECO:0000250" key="1"/>
<feature type="chain" id="PRO_0000288760" description="Pyruvate dehydrogenase E1 component subunit beta">
    <location>
        <begin position="1"/>
        <end position="325"/>
    </location>
</feature>
<feature type="binding site" evidence="1">
    <location>
        <position position="59"/>
    </location>
    <ligand>
        <name>thiamine diphosphate</name>
        <dbReference type="ChEBI" id="CHEBI:58937"/>
    </ligand>
</feature>